<sequence length="262" mass="29526">MAALSCLLDSVRRDIKKVDRELRQLRCIDEFSTRCLCDLYMHPYCCCDLHPYPYCLCYSKRSRSCGLCDLYPCCLCDVKLYCLRPSLRSLERKAIRAIEDEKRELAKLRRTTNRILASSCCSSNILGSVNVCGFEPDQVKVRVKDGKVCVSAERENRYDCLGSKKYSYMNICKEFSLPPCVDEKDVTYSYGLGSCVKIESPCYPCTSPCNPCNPCSPCNPCNPCNPCNPCSPCSPCSPCNPCDPCNPCYPCGSRFSCRKMIL</sequence>
<name>ODFP1_PIG</name>
<feature type="chain" id="PRO_0000058026" description="Outer dense fiber protein 1">
    <location>
        <begin position="1"/>
        <end position="262"/>
    </location>
</feature>
<feature type="repeat" description="1">
    <location>
        <begin position="34"/>
        <end position="38"/>
    </location>
</feature>
<feature type="repeat" description="2">
    <location>
        <begin position="73"/>
        <end position="77"/>
    </location>
</feature>
<feature type="region of interest" description="2 X 5 AA repeats of [RC]-C-L-C-D">
    <location>
        <begin position="34"/>
        <end position="77"/>
    </location>
</feature>
<feature type="region of interest" description="C-X-P repeat region">
    <location>
        <begin position="209"/>
        <end position="250"/>
    </location>
</feature>
<feature type="modified residue" description="Phosphoserine" evidence="1">
    <location>
        <position position="5"/>
    </location>
</feature>
<feature type="modified residue" description="Phosphoserine" evidence="1">
    <location>
        <position position="10"/>
    </location>
</feature>
<feature type="modified residue" description="Phosphoserine" evidence="1">
    <location>
        <position position="64"/>
    </location>
</feature>
<feature type="modified residue" description="Phosphoserine" evidence="1">
    <location>
        <position position="86"/>
    </location>
</feature>
<feature type="modified residue" description="Phosphoserine" evidence="1">
    <location>
        <position position="122"/>
    </location>
</feature>
<feature type="modified residue" description="Phosphoserine" evidence="1">
    <location>
        <position position="123"/>
    </location>
</feature>
<feature type="modified residue" description="Phosphoserine" evidence="1">
    <location>
        <position position="151"/>
    </location>
</feature>
<feature type="modified residue" description="Phosphoserine" evidence="1">
    <location>
        <position position="167"/>
    </location>
</feature>
<feature type="modified residue" description="Phosphoserine" evidence="1">
    <location>
        <position position="189"/>
    </location>
</feature>
<feature type="modified residue" description="Phosphoserine" evidence="1">
    <location>
        <position position="194"/>
    </location>
</feature>
<reference key="1">
    <citation type="journal article" date="1995" name="Biol. Chem. Hoppe-Seyler">
        <title>Molecular cloning and characterization of the bovine and porcine outer dense fibers cDNA and organization of the bovine gene.</title>
        <authorList>
            <person name="Kim Y."/>
            <person name="Adham I.M."/>
            <person name="Haack T."/>
            <person name="Kremling H."/>
            <person name="Engel W."/>
        </authorList>
    </citation>
    <scope>NUCLEOTIDE SEQUENCE [MRNA]</scope>
    <source>
        <tissue>Testis</tissue>
    </source>
</reference>
<organism>
    <name type="scientific">Sus scrofa</name>
    <name type="common">Pig</name>
    <dbReference type="NCBI Taxonomy" id="9823"/>
    <lineage>
        <taxon>Eukaryota</taxon>
        <taxon>Metazoa</taxon>
        <taxon>Chordata</taxon>
        <taxon>Craniata</taxon>
        <taxon>Vertebrata</taxon>
        <taxon>Euteleostomi</taxon>
        <taxon>Mammalia</taxon>
        <taxon>Eutheria</taxon>
        <taxon>Laurasiatheria</taxon>
        <taxon>Artiodactyla</taxon>
        <taxon>Suina</taxon>
        <taxon>Suidae</taxon>
        <taxon>Sus</taxon>
    </lineage>
</organism>
<proteinExistence type="evidence at transcript level"/>
<gene>
    <name type="primary">ODF1</name>
    <name type="synonym">ODFP</name>
</gene>
<comment type="function">
    <text>Component of the outer dense fibers (ODF) of spermatozoa. ODF are filamentous structures located on the outside of the axoneme in the midpiece and principal piece of the mammalian sperm tail and may help to maintain the passive elastic structures and elastic recoil of the sperm tail.</text>
</comment>
<comment type="subunit">
    <text evidence="1 2 3">Interacts (via leucine zipper motif) with TCP11 (By similarity). Interacts with SPAG4 (By similarity). Interacts with KLC3 (By similarity). Interacts with CCDC42 (By similarity).</text>
</comment>
<comment type="subcellular location">
    <subcellularLocation>
        <location evidence="3">Cell projection</location>
        <location evidence="3">Cilium</location>
        <location evidence="3">Flagellum</location>
    </subcellularLocation>
    <subcellularLocation>
        <location evidence="3">Cytoplasm</location>
        <location evidence="3">Cytoskeleton</location>
    </subcellularLocation>
    <subcellularLocation>
        <location evidence="3">Cytoplasm</location>
        <location evidence="3">Cytoskeleton</location>
        <location evidence="3">Microtubule organizing center</location>
        <location evidence="3">Centrosome</location>
    </subcellularLocation>
    <text evidence="3">Localizes to the manchette in elongating spermatids and to the sperm flagellum.</text>
</comment>
<comment type="domain">
    <text>The C-terminal contains many C-X-P repeats.</text>
</comment>
<keyword id="KW-0966">Cell projection</keyword>
<keyword id="KW-0969">Cilium</keyword>
<keyword id="KW-0963">Cytoplasm</keyword>
<keyword id="KW-0206">Cytoskeleton</keyword>
<keyword id="KW-0217">Developmental protein</keyword>
<keyword id="KW-0221">Differentiation</keyword>
<keyword id="KW-0282">Flagellum</keyword>
<keyword id="KW-0597">Phosphoprotein</keyword>
<keyword id="KW-1185">Reference proteome</keyword>
<keyword id="KW-0677">Repeat</keyword>
<keyword id="KW-0744">Spermatogenesis</keyword>
<protein>
    <recommendedName>
        <fullName>Outer dense fiber protein 1</fullName>
    </recommendedName>
</protein>
<evidence type="ECO:0000250" key="1">
    <source>
        <dbReference type="UniProtKB" id="P21769"/>
    </source>
</evidence>
<evidence type="ECO:0000250" key="2">
    <source>
        <dbReference type="UniProtKB" id="Q14990"/>
    </source>
</evidence>
<evidence type="ECO:0000250" key="3">
    <source>
        <dbReference type="UniProtKB" id="Q61999"/>
    </source>
</evidence>
<dbReference type="EMBL" id="X69513">
    <property type="protein sequence ID" value="CAA49264.1"/>
    <property type="molecule type" value="mRNA"/>
</dbReference>
<dbReference type="PIR" id="S56100">
    <property type="entry name" value="S56100"/>
</dbReference>
<dbReference type="RefSeq" id="NP_999420.1">
    <property type="nucleotide sequence ID" value="NM_214255.2"/>
</dbReference>
<dbReference type="SMR" id="Q29077"/>
<dbReference type="FunCoup" id="Q29077">
    <property type="interactions" value="250"/>
</dbReference>
<dbReference type="STRING" id="9823.ENSSSCP00000006466"/>
<dbReference type="PaxDb" id="9823-ENSSSCP00000006466"/>
<dbReference type="Ensembl" id="ENSSSCT00000006645.4">
    <property type="protein sequence ID" value="ENSSSCP00000006466.2"/>
    <property type="gene ID" value="ENSSSCG00000006056.6"/>
</dbReference>
<dbReference type="Ensembl" id="ENSSSCT00015025367.1">
    <property type="protein sequence ID" value="ENSSSCP00015009906.1"/>
    <property type="gene ID" value="ENSSSCG00015019215.1"/>
</dbReference>
<dbReference type="Ensembl" id="ENSSSCT00025086988.1">
    <property type="protein sequence ID" value="ENSSSCP00025037883.1"/>
    <property type="gene ID" value="ENSSSCG00025063513.1"/>
</dbReference>
<dbReference type="Ensembl" id="ENSSSCT00030000431.1">
    <property type="protein sequence ID" value="ENSSSCP00030000249.1"/>
    <property type="gene ID" value="ENSSSCG00030000286.1"/>
</dbReference>
<dbReference type="Ensembl" id="ENSSSCT00035018615.1">
    <property type="protein sequence ID" value="ENSSSCP00035006538.1"/>
    <property type="gene ID" value="ENSSSCG00035014666.1"/>
</dbReference>
<dbReference type="Ensembl" id="ENSSSCT00040023765.1">
    <property type="protein sequence ID" value="ENSSSCP00040010063.1"/>
    <property type="gene ID" value="ENSSSCG00040017589.1"/>
</dbReference>
<dbReference type="Ensembl" id="ENSSSCT00045039806.1">
    <property type="protein sequence ID" value="ENSSSCP00045027713.1"/>
    <property type="gene ID" value="ENSSSCG00045023274.1"/>
</dbReference>
<dbReference type="Ensembl" id="ENSSSCT00050029400.1">
    <property type="protein sequence ID" value="ENSSSCP00050012190.1"/>
    <property type="gene ID" value="ENSSSCG00050021807.1"/>
</dbReference>
<dbReference type="Ensembl" id="ENSSSCT00055001706.1">
    <property type="protein sequence ID" value="ENSSSCP00055001289.1"/>
    <property type="gene ID" value="ENSSSCG00055000965.1"/>
</dbReference>
<dbReference type="Ensembl" id="ENSSSCT00060060228.1">
    <property type="protein sequence ID" value="ENSSSCP00060025819.1"/>
    <property type="gene ID" value="ENSSSCG00060044407.1"/>
</dbReference>
<dbReference type="Ensembl" id="ENSSSCT00065013049.1">
    <property type="protein sequence ID" value="ENSSSCP00065005323.1"/>
    <property type="gene ID" value="ENSSSCG00065009810.1"/>
</dbReference>
<dbReference type="Ensembl" id="ENSSSCT00070020882.1">
    <property type="protein sequence ID" value="ENSSSCP00070017267.1"/>
    <property type="gene ID" value="ENSSSCG00070010767.1"/>
</dbReference>
<dbReference type="Ensembl" id="ENSSSCT00115034455">
    <property type="protein sequence ID" value="ENSSSCP00115032719"/>
    <property type="gene ID" value="ENSSSCG00115019454"/>
</dbReference>
<dbReference type="GeneID" id="397489"/>
<dbReference type="KEGG" id="ssc:397489"/>
<dbReference type="CTD" id="4956"/>
<dbReference type="VGNC" id="VGNC:91016">
    <property type="gene designation" value="ODF1"/>
</dbReference>
<dbReference type="eggNOG" id="ENOG502S68A">
    <property type="taxonomic scope" value="Eukaryota"/>
</dbReference>
<dbReference type="GeneTree" id="ENSGT00440000038909"/>
<dbReference type="InParanoid" id="Q29077"/>
<dbReference type="OMA" id="CCLLHPY"/>
<dbReference type="OrthoDB" id="1431247at2759"/>
<dbReference type="TreeFam" id="TF337986"/>
<dbReference type="Proteomes" id="UP000008227">
    <property type="component" value="Chromosome 4"/>
</dbReference>
<dbReference type="Proteomes" id="UP000314985">
    <property type="component" value="Chromosome 4"/>
</dbReference>
<dbReference type="Proteomes" id="UP000694570">
    <property type="component" value="Unplaced"/>
</dbReference>
<dbReference type="Proteomes" id="UP000694571">
    <property type="component" value="Unplaced"/>
</dbReference>
<dbReference type="Proteomes" id="UP000694720">
    <property type="component" value="Unplaced"/>
</dbReference>
<dbReference type="Proteomes" id="UP000694722">
    <property type="component" value="Unplaced"/>
</dbReference>
<dbReference type="Proteomes" id="UP000694723">
    <property type="component" value="Unplaced"/>
</dbReference>
<dbReference type="Proteomes" id="UP000694724">
    <property type="component" value="Unplaced"/>
</dbReference>
<dbReference type="Proteomes" id="UP000694725">
    <property type="component" value="Unplaced"/>
</dbReference>
<dbReference type="Proteomes" id="UP000694726">
    <property type="component" value="Unplaced"/>
</dbReference>
<dbReference type="Proteomes" id="UP000694727">
    <property type="component" value="Unplaced"/>
</dbReference>
<dbReference type="Proteomes" id="UP000694728">
    <property type="component" value="Unplaced"/>
</dbReference>
<dbReference type="Bgee" id="ENSSSCG00000006056">
    <property type="expression patterns" value="Expressed in testis and 6 other cell types or tissues"/>
</dbReference>
<dbReference type="GO" id="GO:0005813">
    <property type="term" value="C:centrosome"/>
    <property type="evidence" value="ECO:0007669"/>
    <property type="project" value="UniProtKB-SubCell"/>
</dbReference>
<dbReference type="GO" id="GO:0005737">
    <property type="term" value="C:cytoplasm"/>
    <property type="evidence" value="ECO:0007669"/>
    <property type="project" value="UniProtKB-KW"/>
</dbReference>
<dbReference type="GO" id="GO:0002177">
    <property type="term" value="C:manchette"/>
    <property type="evidence" value="ECO:0000250"/>
    <property type="project" value="UniProtKB"/>
</dbReference>
<dbReference type="GO" id="GO:0001520">
    <property type="term" value="C:outer dense fiber"/>
    <property type="evidence" value="ECO:0000318"/>
    <property type="project" value="GO_Central"/>
</dbReference>
<dbReference type="GO" id="GO:0036126">
    <property type="term" value="C:sperm flagellum"/>
    <property type="evidence" value="ECO:0000250"/>
    <property type="project" value="UniProtKB"/>
</dbReference>
<dbReference type="GO" id="GO:0030154">
    <property type="term" value="P:cell differentiation"/>
    <property type="evidence" value="ECO:0007669"/>
    <property type="project" value="UniProtKB-KW"/>
</dbReference>
<dbReference type="GO" id="GO:0007283">
    <property type="term" value="P:spermatogenesis"/>
    <property type="evidence" value="ECO:0007669"/>
    <property type="project" value="UniProtKB-KW"/>
</dbReference>
<dbReference type="CDD" id="cd06482">
    <property type="entry name" value="ACD_HspB10"/>
    <property type="match status" value="1"/>
</dbReference>
<dbReference type="FunFam" id="2.60.40.790:FF:000026">
    <property type="entry name" value="Outer dense fiber protein 1"/>
    <property type="match status" value="1"/>
</dbReference>
<dbReference type="Gene3D" id="2.60.40.790">
    <property type="match status" value="1"/>
</dbReference>
<dbReference type="InterPro" id="IPR002068">
    <property type="entry name" value="A-crystallin/Hsp20_dom"/>
</dbReference>
<dbReference type="InterPro" id="IPR008978">
    <property type="entry name" value="HSP20-like_chaperone"/>
</dbReference>
<dbReference type="InterPro" id="IPR037552">
    <property type="entry name" value="ODF1_ACD"/>
</dbReference>
<dbReference type="InterPro" id="IPR037389">
    <property type="entry name" value="ODFP"/>
</dbReference>
<dbReference type="PANTHER" id="PTHR17125">
    <property type="entry name" value="OUTER DENSE FIBER PROTEIN 1"/>
    <property type="match status" value="1"/>
</dbReference>
<dbReference type="PANTHER" id="PTHR17125:SF2">
    <property type="entry name" value="OUTER DENSE FIBER PROTEIN 1"/>
    <property type="match status" value="1"/>
</dbReference>
<dbReference type="Pfam" id="PF00011">
    <property type="entry name" value="HSP20"/>
    <property type="match status" value="1"/>
</dbReference>
<dbReference type="SUPFAM" id="SSF49764">
    <property type="entry name" value="HSP20-like chaperones"/>
    <property type="match status" value="1"/>
</dbReference>
<accession>Q29077</accession>